<gene>
    <name evidence="1" type="primary">petN</name>
</gene>
<protein>
    <recommendedName>
        <fullName evidence="1">Cytochrome b6-f complex subunit 8</fullName>
    </recommendedName>
    <alternativeName>
        <fullName evidence="1">Cytochrome b6-f complex subunit PetN</fullName>
    </alternativeName>
    <alternativeName>
        <fullName evidence="1">Cytochrome b6-f complex subunit VIII</fullName>
    </alternativeName>
</protein>
<reference key="1">
    <citation type="journal article" date="2007" name="Mol. Biol. Evol.">
        <title>Plastid genome sequence of the cryptophyte alga Rhodomonas salina CCMP1319: lateral transfer of putative DNA replication machinery and a test of chromist plastid phylogeny.</title>
        <authorList>
            <person name="Khan H."/>
            <person name="Parks N."/>
            <person name="Kozera C."/>
            <person name="Curtis B.A."/>
            <person name="Parsons B.J."/>
            <person name="Bowman S."/>
            <person name="Archibald J.M."/>
        </authorList>
    </citation>
    <scope>NUCLEOTIDE SEQUENCE [LARGE SCALE GENOMIC DNA]</scope>
    <source>
        <strain>CCMP1319 / NEPCC76 / CS-174</strain>
    </source>
</reference>
<feature type="chain" id="PRO_0000355463" description="Cytochrome b6-f complex subunit 8">
    <location>
        <begin position="1"/>
        <end position="29"/>
    </location>
</feature>
<feature type="transmembrane region" description="Helical" evidence="1">
    <location>
        <begin position="3"/>
        <end position="23"/>
    </location>
</feature>
<proteinExistence type="inferred from homology"/>
<name>PETN_RHDSA</name>
<evidence type="ECO:0000255" key="1">
    <source>
        <dbReference type="HAMAP-Rule" id="MF_00395"/>
    </source>
</evidence>
<comment type="function">
    <text evidence="1">Component of the cytochrome b6-f complex, which mediates electron transfer between photosystem II (PSII) and photosystem I (PSI), cyclic electron flow around PSI, and state transitions.</text>
</comment>
<comment type="subunit">
    <text evidence="1">The 4 large subunits of the cytochrome b6-f complex are cytochrome b6, subunit IV (17 kDa polypeptide, PetD), cytochrome f and the Rieske protein, while the 4 small subunits are PetG, PetL, PetM and PetN. The complex functions as a dimer.</text>
</comment>
<comment type="subcellular location">
    <subcellularLocation>
        <location evidence="1">Plastid</location>
        <location evidence="1">Chloroplast thylakoid membrane</location>
        <topology evidence="1">Single-pass membrane protein</topology>
    </subcellularLocation>
</comment>
<comment type="similarity">
    <text evidence="1">Belongs to the PetN family.</text>
</comment>
<organism>
    <name type="scientific">Rhodomonas salina</name>
    <name type="common">Cryptomonas salina</name>
    <dbReference type="NCBI Taxonomy" id="52970"/>
    <lineage>
        <taxon>Eukaryota</taxon>
        <taxon>Cryptophyceae</taxon>
        <taxon>Pyrenomonadales</taxon>
        <taxon>Pyrenomonadaceae</taxon>
        <taxon>Rhodomonas</taxon>
    </lineage>
</organism>
<sequence>MDIISLGWSSLLVVFTFSLSLVVWGRNGF</sequence>
<keyword id="KW-0150">Chloroplast</keyword>
<keyword id="KW-0249">Electron transport</keyword>
<keyword id="KW-0472">Membrane</keyword>
<keyword id="KW-0602">Photosynthesis</keyword>
<keyword id="KW-0934">Plastid</keyword>
<keyword id="KW-0793">Thylakoid</keyword>
<keyword id="KW-0812">Transmembrane</keyword>
<keyword id="KW-1133">Transmembrane helix</keyword>
<keyword id="KW-0813">Transport</keyword>
<dbReference type="EMBL" id="EF508371">
    <property type="protein sequence ID" value="ABO70755.1"/>
    <property type="molecule type" value="Genomic_DNA"/>
</dbReference>
<dbReference type="RefSeq" id="YP_001293566.1">
    <property type="nucleotide sequence ID" value="NC_009573.1"/>
</dbReference>
<dbReference type="SMR" id="A6MVY7"/>
<dbReference type="GeneID" id="5228630"/>
<dbReference type="GO" id="GO:0009535">
    <property type="term" value="C:chloroplast thylakoid membrane"/>
    <property type="evidence" value="ECO:0007669"/>
    <property type="project" value="UniProtKB-SubCell"/>
</dbReference>
<dbReference type="GO" id="GO:0009512">
    <property type="term" value="C:cytochrome b6f complex"/>
    <property type="evidence" value="ECO:0007669"/>
    <property type="project" value="InterPro"/>
</dbReference>
<dbReference type="GO" id="GO:0045158">
    <property type="term" value="F:electron transporter, transferring electrons within cytochrome b6/f complex of photosystem II activity"/>
    <property type="evidence" value="ECO:0007669"/>
    <property type="project" value="InterPro"/>
</dbReference>
<dbReference type="GO" id="GO:0017004">
    <property type="term" value="P:cytochrome complex assembly"/>
    <property type="evidence" value="ECO:0007669"/>
    <property type="project" value="UniProtKB-UniRule"/>
</dbReference>
<dbReference type="GO" id="GO:0015979">
    <property type="term" value="P:photosynthesis"/>
    <property type="evidence" value="ECO:0007669"/>
    <property type="project" value="UniProtKB-KW"/>
</dbReference>
<dbReference type="HAMAP" id="MF_00395">
    <property type="entry name" value="Cytb6_f_PetN"/>
    <property type="match status" value="1"/>
</dbReference>
<dbReference type="InterPro" id="IPR036143">
    <property type="entry name" value="Cytochr_b6-f_cplx_su8_sf"/>
</dbReference>
<dbReference type="InterPro" id="IPR005497">
    <property type="entry name" value="Cytochrome_b6-f_cplx_su8"/>
</dbReference>
<dbReference type="NCBIfam" id="NF011331">
    <property type="entry name" value="PRK14747.1"/>
    <property type="match status" value="1"/>
</dbReference>
<dbReference type="Pfam" id="PF03742">
    <property type="entry name" value="PetN"/>
    <property type="match status" value="1"/>
</dbReference>
<dbReference type="SUPFAM" id="SSF103451">
    <property type="entry name" value="PetN subunit of the cytochrome b6f complex"/>
    <property type="match status" value="1"/>
</dbReference>
<accession>A6MVY7</accession>
<geneLocation type="chloroplast"/>